<reference key="1">
    <citation type="journal article" date="2010" name="PLoS Genet.">
        <title>Genome sequence of the plant growth promoting endophytic bacterium Enterobacter sp. 638.</title>
        <authorList>
            <person name="Taghavi S."/>
            <person name="van der Lelie D."/>
            <person name="Hoffman A."/>
            <person name="Zhang Y.B."/>
            <person name="Walla M.D."/>
            <person name="Vangronsveld J."/>
            <person name="Newman L."/>
            <person name="Monchy S."/>
        </authorList>
    </citation>
    <scope>NUCLEOTIDE SEQUENCE [LARGE SCALE GENOMIC DNA]</scope>
    <source>
        <strain>638</strain>
    </source>
</reference>
<comment type="function">
    <text evidence="1">Na(+)/H(+) antiporter that extrudes sodium in exchange for external protons.</text>
</comment>
<comment type="catalytic activity">
    <reaction evidence="1">
        <text>Na(+)(in) + 2 H(+)(out) = Na(+)(out) + 2 H(+)(in)</text>
        <dbReference type="Rhea" id="RHEA:29251"/>
        <dbReference type="ChEBI" id="CHEBI:15378"/>
        <dbReference type="ChEBI" id="CHEBI:29101"/>
    </reaction>
    <physiologicalReaction direction="left-to-right" evidence="1">
        <dbReference type="Rhea" id="RHEA:29252"/>
    </physiologicalReaction>
</comment>
<comment type="subcellular location">
    <subcellularLocation>
        <location evidence="1">Cell inner membrane</location>
        <topology evidence="1">Multi-pass membrane protein</topology>
    </subcellularLocation>
</comment>
<comment type="similarity">
    <text evidence="1">Belongs to the NhaA Na(+)/H(+) (TC 2.A.33) antiporter family.</text>
</comment>
<protein>
    <recommendedName>
        <fullName evidence="1">Na(+)/H(+) antiporter NhaA</fullName>
    </recommendedName>
    <alternativeName>
        <fullName evidence="1">Sodium/proton antiporter NhaA</fullName>
    </alternativeName>
</protein>
<organism>
    <name type="scientific">Enterobacter sp. (strain 638)</name>
    <dbReference type="NCBI Taxonomy" id="399742"/>
    <lineage>
        <taxon>Bacteria</taxon>
        <taxon>Pseudomonadati</taxon>
        <taxon>Pseudomonadota</taxon>
        <taxon>Gammaproteobacteria</taxon>
        <taxon>Enterobacterales</taxon>
        <taxon>Enterobacteriaceae</taxon>
        <taxon>Enterobacter</taxon>
    </lineage>
</organism>
<feature type="chain" id="PRO_0000334280" description="Na(+)/H(+) antiporter NhaA">
    <location>
        <begin position="1"/>
        <end position="391"/>
    </location>
</feature>
<feature type="transmembrane region" description="Helical" evidence="1">
    <location>
        <begin position="14"/>
        <end position="34"/>
    </location>
</feature>
<feature type="transmembrane region" description="Helical" evidence="1">
    <location>
        <begin position="59"/>
        <end position="79"/>
    </location>
</feature>
<feature type="transmembrane region" description="Helical" evidence="1">
    <location>
        <begin position="95"/>
        <end position="115"/>
    </location>
</feature>
<feature type="transmembrane region" description="Helical" evidence="1">
    <location>
        <begin position="125"/>
        <end position="145"/>
    </location>
</feature>
<feature type="transmembrane region" description="Helical" evidence="1">
    <location>
        <begin position="154"/>
        <end position="174"/>
    </location>
</feature>
<feature type="transmembrane region" description="Helical" evidence="1">
    <location>
        <begin position="180"/>
        <end position="200"/>
    </location>
</feature>
<feature type="transmembrane region" description="Helical" evidence="1">
    <location>
        <begin position="219"/>
        <end position="239"/>
    </location>
</feature>
<feature type="transmembrane region" description="Helical" evidence="1">
    <location>
        <begin position="254"/>
        <end position="274"/>
    </location>
</feature>
<feature type="transmembrane region" description="Helical" evidence="1">
    <location>
        <begin position="292"/>
        <end position="312"/>
    </location>
</feature>
<feature type="transmembrane region" description="Helical" evidence="1">
    <location>
        <begin position="328"/>
        <end position="348"/>
    </location>
</feature>
<feature type="transmembrane region" description="Helical" evidence="1">
    <location>
        <begin position="357"/>
        <end position="377"/>
    </location>
</feature>
<keyword id="KW-0050">Antiport</keyword>
<keyword id="KW-0997">Cell inner membrane</keyword>
<keyword id="KW-1003">Cell membrane</keyword>
<keyword id="KW-0406">Ion transport</keyword>
<keyword id="KW-0472">Membrane</keyword>
<keyword id="KW-0915">Sodium</keyword>
<keyword id="KW-0739">Sodium transport</keyword>
<keyword id="KW-0812">Transmembrane</keyword>
<keyword id="KW-1133">Transmembrane helix</keyword>
<keyword id="KW-0813">Transport</keyword>
<name>NHAA_ENT38</name>
<gene>
    <name evidence="1" type="primary">nhaA</name>
    <name type="ordered locus">Ent638_0580</name>
</gene>
<accession>A4W6D7</accession>
<dbReference type="EMBL" id="CP000653">
    <property type="protein sequence ID" value="ABP59267.1"/>
    <property type="molecule type" value="Genomic_DNA"/>
</dbReference>
<dbReference type="RefSeq" id="WP_012015989.1">
    <property type="nucleotide sequence ID" value="NC_009436.1"/>
</dbReference>
<dbReference type="SMR" id="A4W6D7"/>
<dbReference type="STRING" id="399742.Ent638_0580"/>
<dbReference type="KEGG" id="ent:Ent638_0580"/>
<dbReference type="eggNOG" id="COG3004">
    <property type="taxonomic scope" value="Bacteria"/>
</dbReference>
<dbReference type="HOGENOM" id="CLU_015803_1_0_6"/>
<dbReference type="OrthoDB" id="9808135at2"/>
<dbReference type="Proteomes" id="UP000000230">
    <property type="component" value="Chromosome"/>
</dbReference>
<dbReference type="GO" id="GO:0005886">
    <property type="term" value="C:plasma membrane"/>
    <property type="evidence" value="ECO:0007669"/>
    <property type="project" value="UniProtKB-SubCell"/>
</dbReference>
<dbReference type="GO" id="GO:0015385">
    <property type="term" value="F:sodium:proton antiporter activity"/>
    <property type="evidence" value="ECO:0007669"/>
    <property type="project" value="TreeGrafter"/>
</dbReference>
<dbReference type="GO" id="GO:0006885">
    <property type="term" value="P:regulation of pH"/>
    <property type="evidence" value="ECO:0007669"/>
    <property type="project" value="InterPro"/>
</dbReference>
<dbReference type="FunFam" id="1.20.1530.10:FF:000001">
    <property type="entry name" value="Na(+)/H(+) antiporter NhaA"/>
    <property type="match status" value="1"/>
</dbReference>
<dbReference type="Gene3D" id="1.20.1530.10">
    <property type="entry name" value="Na+/H+ antiporter like domain"/>
    <property type="match status" value="1"/>
</dbReference>
<dbReference type="HAMAP" id="MF_01844">
    <property type="entry name" value="NhaA"/>
    <property type="match status" value="1"/>
</dbReference>
<dbReference type="InterPro" id="IPR023171">
    <property type="entry name" value="Na/H_antiporter_dom_sf"/>
</dbReference>
<dbReference type="InterPro" id="IPR004670">
    <property type="entry name" value="NhaA"/>
</dbReference>
<dbReference type="NCBIfam" id="TIGR00773">
    <property type="entry name" value="NhaA"/>
    <property type="match status" value="1"/>
</dbReference>
<dbReference type="NCBIfam" id="NF007111">
    <property type="entry name" value="PRK09560.1"/>
    <property type="match status" value="1"/>
</dbReference>
<dbReference type="NCBIfam" id="NF007112">
    <property type="entry name" value="PRK09561.1"/>
    <property type="match status" value="1"/>
</dbReference>
<dbReference type="PANTHER" id="PTHR30341:SF0">
    <property type="entry name" value="NA(+)_H(+) ANTIPORTER NHAA"/>
    <property type="match status" value="1"/>
</dbReference>
<dbReference type="PANTHER" id="PTHR30341">
    <property type="entry name" value="SODIUM ION/PROTON ANTIPORTER NHAA-RELATED"/>
    <property type="match status" value="1"/>
</dbReference>
<dbReference type="Pfam" id="PF06965">
    <property type="entry name" value="Na_H_antiport_1"/>
    <property type="match status" value="1"/>
</dbReference>
<sequence>MKLLHRFFSNEASGGIILIIAAAAAMVFANLGATQGLYHAFLETPVELRVGVLEINKNMLLWINDALMAVFFLLVGLEVKRELVQGSLASRQRAAFPVIAAIGGMVVPALLYLAFNYQDPIARQGWAIPAATDIAFALGVLALLGSRVPVALKIFLMALAIIDDLGAIVIIALFYTSDLSILSLSVAAGAIAALALLNIFNVRRTGIYILVGVVLWTAVLKSGVHATLAGVIIGFFIPLKEQDGHSPAQQLEHVLHPWVAFMILPLFAFANAGVSLQGVTLSGLTSMLPMGIIAGLFIGKPLGISLFCWLALKLKLASLPQGTTFRQIMAVGVLCGIGFTMSIFISTLAFASMDPQLIVWAKLGILTGSLLAAFVGYSLLKVKLSGQVQPV</sequence>
<evidence type="ECO:0000255" key="1">
    <source>
        <dbReference type="HAMAP-Rule" id="MF_01844"/>
    </source>
</evidence>
<proteinExistence type="inferred from homology"/>